<protein>
    <recommendedName>
        <fullName evidence="4">Minor structural pilin EpdB</fullName>
    </recommendedName>
</protein>
<keyword id="KW-0281">Fimbrium</keyword>
<keyword id="KW-1185">Reference proteome</keyword>
<keyword id="KW-0964">Secreted</keyword>
<name>EPDB_METMP</name>
<dbReference type="EMBL" id="BX950229">
    <property type="protein sequence ID" value="CAF29792.1"/>
    <property type="molecule type" value="Genomic_DNA"/>
</dbReference>
<dbReference type="RefSeq" id="WP_011170180.1">
    <property type="nucleotide sequence ID" value="NC_005791.1"/>
</dbReference>
<dbReference type="STRING" id="267377.MMP0236"/>
<dbReference type="EnsemblBacteria" id="CAF29792">
    <property type="protein sequence ID" value="CAF29792"/>
    <property type="gene ID" value="MMP0236"/>
</dbReference>
<dbReference type="GeneID" id="2762595"/>
<dbReference type="KEGG" id="mmp:MMP0236"/>
<dbReference type="PATRIC" id="fig|267377.15.peg.238"/>
<dbReference type="eggNOG" id="arCOG05053">
    <property type="taxonomic scope" value="Archaea"/>
</dbReference>
<dbReference type="HOGENOM" id="CLU_1912362_0_0_2"/>
<dbReference type="OrthoDB" id="65948at2157"/>
<dbReference type="Proteomes" id="UP000000590">
    <property type="component" value="Chromosome"/>
</dbReference>
<dbReference type="GO" id="GO:0009986">
    <property type="term" value="C:cell surface"/>
    <property type="evidence" value="ECO:0007669"/>
    <property type="project" value="UniProtKB-SubCell"/>
</dbReference>
<dbReference type="GO" id="GO:0005576">
    <property type="term" value="C:extracellular region"/>
    <property type="evidence" value="ECO:0007669"/>
    <property type="project" value="UniProtKB-SubCell"/>
</dbReference>
<dbReference type="InterPro" id="IPR007166">
    <property type="entry name" value="Class3_signal_pept_motif"/>
</dbReference>
<dbReference type="Pfam" id="PF04021">
    <property type="entry name" value="Class_IIIsignal"/>
    <property type="match status" value="1"/>
</dbReference>
<evidence type="ECO:0000250" key="1">
    <source>
        <dbReference type="UniProtKB" id="Q6LWM4"/>
    </source>
</evidence>
<evidence type="ECO:0000269" key="2">
    <source>
    </source>
</evidence>
<evidence type="ECO:0000303" key="3">
    <source>
    </source>
</evidence>
<evidence type="ECO:0000305" key="4"/>
<evidence type="ECO:0000305" key="5">
    <source>
    </source>
</evidence>
<evidence type="ECO:0000312" key="6">
    <source>
        <dbReference type="EMBL" id="CAF29792.1"/>
    </source>
</evidence>
<organism>
    <name type="scientific">Methanococcus maripaludis (strain DSM 14266 / JCM 13030 / NBRC 101832 / S2 / LL)</name>
    <dbReference type="NCBI Taxonomy" id="267377"/>
    <lineage>
        <taxon>Archaea</taxon>
        <taxon>Methanobacteriati</taxon>
        <taxon>Methanobacteriota</taxon>
        <taxon>Methanomada group</taxon>
        <taxon>Methanococci</taxon>
        <taxon>Methanococcales</taxon>
        <taxon>Methanococcaceae</taxon>
        <taxon>Methanococcus</taxon>
    </lineage>
</organism>
<gene>
    <name evidence="3" type="primary">epdB</name>
    <name evidence="6" type="ordered locus">MMP0236</name>
</gene>
<proteinExistence type="evidence at protein level"/>
<sequence>MSKGQVSVEFIVLFLALLVAVVVSTMTPGIFGLNKSVELSSASLAHAALSKVKSNIEILSVSGEGSYKLVYVKSPPANWTFENRTIRVYGNGFNISTNTSVDLNTYNYLASSLKILSVNLTRNDKNVTVAIQ</sequence>
<reference key="1">
    <citation type="journal article" date="2004" name="J. Bacteriol.">
        <title>Complete genome sequence of the genetically tractable hydrogenotrophic methanogen Methanococcus maripaludis.</title>
        <authorList>
            <person name="Hendrickson E.L."/>
            <person name="Kaul R."/>
            <person name="Zhou Y."/>
            <person name="Bovee D."/>
            <person name="Chapman P."/>
            <person name="Chung J."/>
            <person name="Conway de Macario E."/>
            <person name="Dodsworth J.A."/>
            <person name="Gillett W."/>
            <person name="Graham D.E."/>
            <person name="Hackett M."/>
            <person name="Haydock A.K."/>
            <person name="Kang A."/>
            <person name="Land M.L."/>
            <person name="Levy R."/>
            <person name="Lie T.J."/>
            <person name="Major T.A."/>
            <person name="Moore B.C."/>
            <person name="Porat I."/>
            <person name="Palmeiri A."/>
            <person name="Rouse G."/>
            <person name="Saenphimmachak C."/>
            <person name="Soell D."/>
            <person name="Van Dien S."/>
            <person name="Wang T."/>
            <person name="Whitman W.B."/>
            <person name="Xia Q."/>
            <person name="Zhang Y."/>
            <person name="Larimer F.W."/>
            <person name="Olson M.V."/>
            <person name="Leigh J.A."/>
        </authorList>
    </citation>
    <scope>NUCLEOTIDE SEQUENCE [LARGE SCALE GENOMIC DNA]</scope>
    <source>
        <strain>DSM 14266 / JCM 13030 / NBRC 101832 / S2 / LL</strain>
    </source>
</reference>
<reference key="2">
    <citation type="journal article" date="2011" name="J. Bacteriol.">
        <title>Genetic and mass spectrometry analyses of the unusual type IV-like pili of the archaeon Methanococcus maripaludis.</title>
        <authorList>
            <person name="Ng S.Y."/>
            <person name="Wu J."/>
            <person name="Nair D.B."/>
            <person name="Logan S.M."/>
            <person name="Robotham A."/>
            <person name="Tessier L."/>
            <person name="Kelly J.F."/>
            <person name="Uchida K."/>
            <person name="Aizawa S."/>
            <person name="Jarrell K.F."/>
        </authorList>
    </citation>
    <scope>FUNCTION</scope>
    <scope>DOMAIN</scope>
    <scope>DISRUPTION PHENOTYPE</scope>
    <scope>IDENTIFICATION BY MASS SPECTROMETRY</scope>
</reference>
<reference key="3">
    <citation type="journal article" date="2013" name="PLoS ONE">
        <title>Identification of an additional minor pilin essential for piliation in the archaeon Methanococcus maripaludis.</title>
        <authorList>
            <person name="Nair D.B."/>
            <person name="Chung D.K."/>
            <person name="Schneider J."/>
            <person name="Uchida K."/>
            <person name="Aizawa S."/>
            <person name="Jarrell K.F."/>
        </authorList>
    </citation>
    <scope>NOMENCLATURE</scope>
    <source>
        <strain>DSM 14266 / JCM 13030 / NBRC 101832 / S2 / LL</strain>
    </source>
</reference>
<feature type="propeptide" id="PRO_0000462048" evidence="5">
    <location>
        <begin position="1"/>
        <end position="4"/>
    </location>
</feature>
<feature type="chain" id="PRO_0000462049" description="Minor structural pilin EpdB">
    <location>
        <begin position="5"/>
        <end position="132"/>
    </location>
</feature>
<feature type="short sequence motif" description="QXSXEXXXL" evidence="5">
    <location>
        <begin position="9"/>
        <end position="19"/>
    </location>
</feature>
<comment type="function">
    <text evidence="2">Minor component of the type IV-like pili (PubMed:21075925). Essential for pili formation (PubMed:21075925).</text>
</comment>
<comment type="subcellular location">
    <subcellularLocation>
        <location evidence="4">Secreted</location>
    </subcellularLocation>
    <subcellularLocation>
        <location evidence="5">Cell surface</location>
    </subcellularLocation>
    <subcellularLocation>
        <location evidence="5">Fimbrium</location>
    </subcellularLocation>
</comment>
<comment type="domain">
    <text evidence="2">Contains an amino terminal motif QXSXEXXXL, which is part of a class III signal sequence.</text>
</comment>
<comment type="PTM">
    <text evidence="1">The N-terminus is probably cleaved by the prepilin peptidase EppA, which recognizes the class III signal sequence.</text>
</comment>
<comment type="disruption phenotype">
    <text evidence="2">Deletion of the gene leads to completely nonpiliated cells.</text>
</comment>
<accession>Q6M0N4</accession>